<feature type="chain" id="PRO_0000299615" description="Putative uncharacterized protein YLR123C">
    <location>
        <begin position="1"/>
        <end position="109"/>
    </location>
</feature>
<feature type="transmembrane region" description="Helical" evidence="1">
    <location>
        <begin position="75"/>
        <end position="95"/>
    </location>
</feature>
<name>YL123_YEAST</name>
<reference key="1">
    <citation type="journal article" date="1997" name="Yeast">
        <title>Sequence analysis of a 37.6 kbp cosmid clone from the right arm of Saccharomyces cerevisiae chromosome XII, carrying YAP3, HOG1, SNR6, tRNA-Arg3 and 23 new open reading frames, among which several homologies to proteins involved in cell division control and to mammalian growth factors and other animal proteins are found.</title>
        <authorList>
            <person name="Verhasselt P."/>
            <person name="Volckaert G."/>
        </authorList>
    </citation>
    <scope>NUCLEOTIDE SEQUENCE [GENOMIC DNA]</scope>
    <source>
        <strain>ATCC 90840 / EAY235 / FY23</strain>
    </source>
</reference>
<reference key="2">
    <citation type="journal article" date="1997" name="Nature">
        <title>The nucleotide sequence of Saccharomyces cerevisiae chromosome XII.</title>
        <authorList>
            <person name="Johnston M."/>
            <person name="Hillier L.W."/>
            <person name="Riles L."/>
            <person name="Albermann K."/>
            <person name="Andre B."/>
            <person name="Ansorge W."/>
            <person name="Benes V."/>
            <person name="Brueckner M."/>
            <person name="Delius H."/>
            <person name="Dubois E."/>
            <person name="Duesterhoeft A."/>
            <person name="Entian K.-D."/>
            <person name="Floeth M."/>
            <person name="Goffeau A."/>
            <person name="Hebling U."/>
            <person name="Heumann K."/>
            <person name="Heuss-Neitzel D."/>
            <person name="Hilbert H."/>
            <person name="Hilger F."/>
            <person name="Kleine K."/>
            <person name="Koetter P."/>
            <person name="Louis E.J."/>
            <person name="Messenguy F."/>
            <person name="Mewes H.-W."/>
            <person name="Miosga T."/>
            <person name="Moestl D."/>
            <person name="Mueller-Auer S."/>
            <person name="Nentwich U."/>
            <person name="Obermaier B."/>
            <person name="Piravandi E."/>
            <person name="Pohl T.M."/>
            <person name="Portetelle D."/>
            <person name="Purnelle B."/>
            <person name="Rechmann S."/>
            <person name="Rieger M."/>
            <person name="Rinke M."/>
            <person name="Rose M."/>
            <person name="Scharfe M."/>
            <person name="Scherens B."/>
            <person name="Scholler P."/>
            <person name="Schwager C."/>
            <person name="Schwarz S."/>
            <person name="Underwood A.P."/>
            <person name="Urrestarazu L.A."/>
            <person name="Vandenbol M."/>
            <person name="Verhasselt P."/>
            <person name="Vierendeels F."/>
            <person name="Voet M."/>
            <person name="Volckaert G."/>
            <person name="Voss H."/>
            <person name="Wambutt R."/>
            <person name="Wedler E."/>
            <person name="Wedler H."/>
            <person name="Zimmermann F.K."/>
            <person name="Zollner A."/>
            <person name="Hani J."/>
            <person name="Hoheisel J.D."/>
        </authorList>
    </citation>
    <scope>NUCLEOTIDE SEQUENCE [LARGE SCALE GENOMIC DNA]</scope>
    <source>
        <strain>ATCC 204508 / S288c</strain>
    </source>
</reference>
<reference key="3">
    <citation type="journal article" date="2014" name="G3 (Bethesda)">
        <title>The reference genome sequence of Saccharomyces cerevisiae: Then and now.</title>
        <authorList>
            <person name="Engel S.R."/>
            <person name="Dietrich F.S."/>
            <person name="Fisk D.G."/>
            <person name="Binkley G."/>
            <person name="Balakrishnan R."/>
            <person name="Costanzo M.C."/>
            <person name="Dwight S.S."/>
            <person name="Hitz B.C."/>
            <person name="Karra K."/>
            <person name="Nash R.S."/>
            <person name="Weng S."/>
            <person name="Wong E.D."/>
            <person name="Lloyd P."/>
            <person name="Skrzypek M.S."/>
            <person name="Miyasato S.R."/>
            <person name="Simison M."/>
            <person name="Cherry J.M."/>
        </authorList>
    </citation>
    <scope>GENOME REANNOTATION</scope>
    <source>
        <strain>ATCC 204508 / S288c</strain>
    </source>
</reference>
<reference key="4">
    <citation type="journal article" date="2007" name="Genome Res.">
        <title>Approaching a complete repository of sequence-verified protein-encoding clones for Saccharomyces cerevisiae.</title>
        <authorList>
            <person name="Hu Y."/>
            <person name="Rolfs A."/>
            <person name="Bhullar B."/>
            <person name="Murthy T.V.S."/>
            <person name="Zhu C."/>
            <person name="Berger M.F."/>
            <person name="Camargo A.A."/>
            <person name="Kelley F."/>
            <person name="McCarron S."/>
            <person name="Jepson D."/>
            <person name="Richardson A."/>
            <person name="Raphael J."/>
            <person name="Moreira D."/>
            <person name="Taycher E."/>
            <person name="Zuo D."/>
            <person name="Mohr S."/>
            <person name="Kane M.F."/>
            <person name="Williamson J."/>
            <person name="Simpson A.J.G."/>
            <person name="Bulyk M.L."/>
            <person name="Harlow E."/>
            <person name="Marsischky G."/>
            <person name="Kolodner R.D."/>
            <person name="LaBaer J."/>
        </authorList>
    </citation>
    <scope>NUCLEOTIDE SEQUENCE [GENOMIC DNA]</scope>
    <source>
        <strain>ATCC 204508 / S288c</strain>
    </source>
</reference>
<organism>
    <name type="scientific">Saccharomyces cerevisiae (strain ATCC 204508 / S288c)</name>
    <name type="common">Baker's yeast</name>
    <dbReference type="NCBI Taxonomy" id="559292"/>
    <lineage>
        <taxon>Eukaryota</taxon>
        <taxon>Fungi</taxon>
        <taxon>Dikarya</taxon>
        <taxon>Ascomycota</taxon>
        <taxon>Saccharomycotina</taxon>
        <taxon>Saccharomycetes</taxon>
        <taxon>Saccharomycetales</taxon>
        <taxon>Saccharomycetaceae</taxon>
        <taxon>Saccharomyces</taxon>
    </lineage>
</organism>
<gene>
    <name type="ordered locus">YLR123C</name>
    <name type="ORF">L2970</name>
</gene>
<comment type="subcellular location">
    <subcellularLocation>
        <location evidence="2">Membrane</location>
        <topology evidence="2">Single-pass membrane protein</topology>
    </subcellularLocation>
</comment>
<comment type="miscellaneous">
    <text evidence="2">Overlaps YLR122C.</text>
</comment>
<comment type="caution">
    <text evidence="3">Product of a dubious gene prediction unlikely to encode a functional protein. Because of that it is not part of the S.cerevisiae S288c complete/reference proteome set.</text>
</comment>
<protein>
    <recommendedName>
        <fullName>Putative uncharacterized protein YLR123C</fullName>
    </recommendedName>
</protein>
<evidence type="ECO:0000255" key="1"/>
<evidence type="ECO:0000305" key="2"/>
<evidence type="ECO:0000305" key="3">
    <source>
    </source>
</evidence>
<accession>Q12174</accession>
<sequence>MIMQKRLLNRNSSVVKSRNCLARHQHESSISKLHVSLRLHRCLRPIVRFDFLHNAGSKVCSQNSCPSPQLHVGTMALFHTVFILWPHFCGILWTVHEKLYNYLLSIEVY</sequence>
<dbReference type="EMBL" id="X89514">
    <property type="protein sequence ID" value="CAA61702.1"/>
    <property type="molecule type" value="Genomic_DNA"/>
</dbReference>
<dbReference type="EMBL" id="U53877">
    <property type="protein sequence ID" value="AAB82377.1"/>
    <property type="molecule type" value="Genomic_DNA"/>
</dbReference>
<dbReference type="EMBL" id="Z73294">
    <property type="protein sequence ID" value="CAA97691.1"/>
    <property type="molecule type" value="Genomic_DNA"/>
</dbReference>
<dbReference type="EMBL" id="AY693353">
    <property type="protein sequence ID" value="AAT93372.1"/>
    <property type="molecule type" value="Genomic_DNA"/>
</dbReference>
<dbReference type="PIR" id="S64960">
    <property type="entry name" value="S64960"/>
</dbReference>
<dbReference type="DIP" id="DIP-2132N"/>
<dbReference type="IntAct" id="Q12174">
    <property type="interactions" value="1"/>
</dbReference>
<dbReference type="STRING" id="4932.YLR123C"/>
<dbReference type="PaxDb" id="4932-YLR123C"/>
<dbReference type="EnsemblFungi" id="YLR123C_mRNA">
    <property type="protein sequence ID" value="YLR123C"/>
    <property type="gene ID" value="YLR123C"/>
</dbReference>
<dbReference type="AGR" id="SGD:S000004113"/>
<dbReference type="SGD" id="S000004113">
    <property type="gene designation" value="YLR123C"/>
</dbReference>
<dbReference type="HOGENOM" id="CLU_2186016_0_0_1"/>
<dbReference type="GO" id="GO:0016020">
    <property type="term" value="C:membrane"/>
    <property type="evidence" value="ECO:0007669"/>
    <property type="project" value="UniProtKB-SubCell"/>
</dbReference>
<proteinExistence type="uncertain"/>
<keyword id="KW-0472">Membrane</keyword>
<keyword id="KW-0812">Transmembrane</keyword>
<keyword id="KW-1133">Transmembrane helix</keyword>